<name>SECD_PSEAE</name>
<reference key="1">
    <citation type="journal article" date="2000" name="Nature">
        <title>Complete genome sequence of Pseudomonas aeruginosa PAO1, an opportunistic pathogen.</title>
        <authorList>
            <person name="Stover C.K."/>
            <person name="Pham X.-Q.T."/>
            <person name="Erwin A.L."/>
            <person name="Mizoguchi S.D."/>
            <person name="Warrener P."/>
            <person name="Hickey M.J."/>
            <person name="Brinkman F.S.L."/>
            <person name="Hufnagle W.O."/>
            <person name="Kowalik D.J."/>
            <person name="Lagrou M."/>
            <person name="Garber R.L."/>
            <person name="Goltry L."/>
            <person name="Tolentino E."/>
            <person name="Westbrock-Wadman S."/>
            <person name="Yuan Y."/>
            <person name="Brody L.L."/>
            <person name="Coulter S.N."/>
            <person name="Folger K.R."/>
            <person name="Kas A."/>
            <person name="Larbig K."/>
            <person name="Lim R.M."/>
            <person name="Smith K.A."/>
            <person name="Spencer D.H."/>
            <person name="Wong G.K.-S."/>
            <person name="Wu Z."/>
            <person name="Paulsen I.T."/>
            <person name="Reizer J."/>
            <person name="Saier M.H. Jr."/>
            <person name="Hancock R.E.W."/>
            <person name="Lory S."/>
            <person name="Olson M.V."/>
        </authorList>
    </citation>
    <scope>NUCLEOTIDE SEQUENCE [LARGE SCALE GENOMIC DNA]</scope>
    <source>
        <strain>ATCC 15692 / DSM 22644 / CIP 104116 / JCM 14847 / LMG 12228 / 1C / PRS 101 / PAO1</strain>
    </source>
</reference>
<protein>
    <recommendedName>
        <fullName evidence="1">Protein translocase subunit SecD</fullName>
    </recommendedName>
</protein>
<proteinExistence type="inferred from homology"/>
<keyword id="KW-0997">Cell inner membrane</keyword>
<keyword id="KW-1003">Cell membrane</keyword>
<keyword id="KW-0472">Membrane</keyword>
<keyword id="KW-0653">Protein transport</keyword>
<keyword id="KW-1185">Reference proteome</keyword>
<keyword id="KW-0811">Translocation</keyword>
<keyword id="KW-0812">Transmembrane</keyword>
<keyword id="KW-1133">Transmembrane helix</keyword>
<keyword id="KW-0813">Transport</keyword>
<dbReference type="EMBL" id="AE004091">
    <property type="protein sequence ID" value="AAG07208.1"/>
    <property type="molecule type" value="Genomic_DNA"/>
</dbReference>
<dbReference type="PIR" id="F83169">
    <property type="entry name" value="F83169"/>
</dbReference>
<dbReference type="RefSeq" id="NP_252510.1">
    <property type="nucleotide sequence ID" value="NC_002516.2"/>
</dbReference>
<dbReference type="RefSeq" id="WP_003100609.1">
    <property type="nucleotide sequence ID" value="NZ_QZGE01000001.1"/>
</dbReference>
<dbReference type="SMR" id="Q9HXI1"/>
<dbReference type="FunCoup" id="Q9HXI1">
    <property type="interactions" value="406"/>
</dbReference>
<dbReference type="STRING" id="208964.PA3821"/>
<dbReference type="PaxDb" id="208964-PA3821"/>
<dbReference type="GeneID" id="878279"/>
<dbReference type="KEGG" id="pae:PA3821"/>
<dbReference type="PATRIC" id="fig|208964.12.peg.4000"/>
<dbReference type="PseudoCAP" id="PA3821"/>
<dbReference type="HOGENOM" id="CLU_007894_4_3_6"/>
<dbReference type="InParanoid" id="Q9HXI1"/>
<dbReference type="OrthoDB" id="9805019at2"/>
<dbReference type="PhylomeDB" id="Q9HXI1"/>
<dbReference type="BioCyc" id="PAER208964:G1FZ6-3892-MONOMER"/>
<dbReference type="Proteomes" id="UP000002438">
    <property type="component" value="Chromosome"/>
</dbReference>
<dbReference type="GO" id="GO:0005886">
    <property type="term" value="C:plasma membrane"/>
    <property type="evidence" value="ECO:0000318"/>
    <property type="project" value="GO_Central"/>
</dbReference>
<dbReference type="GO" id="GO:0015450">
    <property type="term" value="F:protein-transporting ATPase activity"/>
    <property type="evidence" value="ECO:0007669"/>
    <property type="project" value="InterPro"/>
</dbReference>
<dbReference type="GO" id="GO:0065002">
    <property type="term" value="P:intracellular protein transmembrane transport"/>
    <property type="evidence" value="ECO:0007669"/>
    <property type="project" value="UniProtKB-UniRule"/>
</dbReference>
<dbReference type="GO" id="GO:0006605">
    <property type="term" value="P:protein targeting"/>
    <property type="evidence" value="ECO:0007669"/>
    <property type="project" value="UniProtKB-UniRule"/>
</dbReference>
<dbReference type="GO" id="GO:0015031">
    <property type="term" value="P:protein transport"/>
    <property type="evidence" value="ECO:0000318"/>
    <property type="project" value="GO_Central"/>
</dbReference>
<dbReference type="GO" id="GO:0043952">
    <property type="term" value="P:protein transport by the Sec complex"/>
    <property type="evidence" value="ECO:0007669"/>
    <property type="project" value="UniProtKB-UniRule"/>
</dbReference>
<dbReference type="FunFam" id="3.30.70.3400:FF:000003">
    <property type="entry name" value="Preprotein translocase subunit SecD"/>
    <property type="match status" value="1"/>
</dbReference>
<dbReference type="FunFam" id="1.20.1640.10:FF:000004">
    <property type="entry name" value="Protein translocase subunit SecD"/>
    <property type="match status" value="1"/>
</dbReference>
<dbReference type="FunFam" id="3.30.1360.200:FF:000001">
    <property type="entry name" value="Protein translocase subunit SecD"/>
    <property type="match status" value="1"/>
</dbReference>
<dbReference type="Gene3D" id="3.30.1360.200">
    <property type="match status" value="1"/>
</dbReference>
<dbReference type="Gene3D" id="3.30.70.3400">
    <property type="match status" value="1"/>
</dbReference>
<dbReference type="Gene3D" id="1.20.1640.10">
    <property type="entry name" value="Multidrug efflux transporter AcrB transmembrane domain"/>
    <property type="match status" value="1"/>
</dbReference>
<dbReference type="HAMAP" id="MF_01463_B">
    <property type="entry name" value="SecD_B"/>
    <property type="match status" value="1"/>
</dbReference>
<dbReference type="InterPro" id="IPR005791">
    <property type="entry name" value="SecD"/>
</dbReference>
<dbReference type="InterPro" id="IPR027398">
    <property type="entry name" value="SecD-TM"/>
</dbReference>
<dbReference type="InterPro" id="IPR022813">
    <property type="entry name" value="SecD/SecF_arch_bac"/>
</dbReference>
<dbReference type="InterPro" id="IPR022646">
    <property type="entry name" value="SecD/SecF_CS"/>
</dbReference>
<dbReference type="InterPro" id="IPR048631">
    <property type="entry name" value="SecD_1st"/>
</dbReference>
<dbReference type="InterPro" id="IPR048634">
    <property type="entry name" value="SecD_SecF_C"/>
</dbReference>
<dbReference type="InterPro" id="IPR055344">
    <property type="entry name" value="SecD_SecF_C_bact"/>
</dbReference>
<dbReference type="InterPro" id="IPR054384">
    <property type="entry name" value="SecDF_P1_head"/>
</dbReference>
<dbReference type="NCBIfam" id="TIGR00916">
    <property type="entry name" value="2A0604s01"/>
    <property type="match status" value="1"/>
</dbReference>
<dbReference type="NCBIfam" id="TIGR01129">
    <property type="entry name" value="secD"/>
    <property type="match status" value="1"/>
</dbReference>
<dbReference type="PANTHER" id="PTHR30081:SF1">
    <property type="entry name" value="PROTEIN TRANSLOCASE SUBUNIT SECD"/>
    <property type="match status" value="1"/>
</dbReference>
<dbReference type="PANTHER" id="PTHR30081">
    <property type="entry name" value="PROTEIN-EXPORT MEMBRANE PROTEIN SEC"/>
    <property type="match status" value="1"/>
</dbReference>
<dbReference type="Pfam" id="PF07549">
    <property type="entry name" value="Sec_GG"/>
    <property type="match status" value="1"/>
</dbReference>
<dbReference type="Pfam" id="PF13721">
    <property type="entry name" value="SecD-TM1"/>
    <property type="match status" value="1"/>
</dbReference>
<dbReference type="Pfam" id="PF21760">
    <property type="entry name" value="SecD_1st"/>
    <property type="match status" value="1"/>
</dbReference>
<dbReference type="Pfam" id="PF02355">
    <property type="entry name" value="SecD_SecF_C"/>
    <property type="match status" value="1"/>
</dbReference>
<dbReference type="Pfam" id="PF22599">
    <property type="entry name" value="SecDF_P1_head"/>
    <property type="match status" value="1"/>
</dbReference>
<dbReference type="SUPFAM" id="SSF82866">
    <property type="entry name" value="Multidrug efflux transporter AcrB transmembrane domain"/>
    <property type="match status" value="1"/>
</dbReference>
<gene>
    <name evidence="1" type="primary">secD</name>
    <name type="ordered locus">PA3821</name>
</gene>
<feature type="chain" id="PRO_0000287813" description="Protein translocase subunit SecD">
    <location>
        <begin position="1"/>
        <end position="620"/>
    </location>
</feature>
<feature type="transmembrane region" description="Helical" evidence="1">
    <location>
        <begin position="10"/>
        <end position="30"/>
    </location>
</feature>
<feature type="transmembrane region" description="Helical" evidence="1">
    <location>
        <begin position="464"/>
        <end position="484"/>
    </location>
</feature>
<feature type="transmembrane region" description="Helical" evidence="1">
    <location>
        <begin position="488"/>
        <end position="507"/>
    </location>
</feature>
<feature type="transmembrane region" description="Helical" evidence="1">
    <location>
        <begin position="511"/>
        <end position="533"/>
    </location>
</feature>
<feature type="transmembrane region" description="Helical" evidence="1">
    <location>
        <begin position="555"/>
        <end position="575"/>
    </location>
</feature>
<feature type="transmembrane region" description="Helical" evidence="1">
    <location>
        <begin position="582"/>
        <end position="602"/>
    </location>
</feature>
<sequence length="620" mass="67675">MLNKYPLWKYLLILAVLAVGFIYSAPNLYPDDPAVQISGASTALQVTQADVDRAAKALTDAGIAVKADSLSKKGGLIRLVKQDDQLPAKEVVRRTLGDDYVVALNLAQTTPEWLRKLGGSPMKLGLDLSGGVHFLLEVDMDKAVDARLKVYESEVKSLLRKERVRYRSLPIQDRAIQLGFTDSESLDKARSLIAKDFRDFEVVPEERNGLQVLRVALTQAKLAEIREYSIKQNLTTVRNRVNELGVSEPLVQRQGANRIVVELPGVQDTAEAKRILGKTANLEFRLAAEPDALKSATETFEFREPRRPPVPLERGVIITGDQVTDASASFDENGRPQVNIRLDGHGGELMNRATRNNVGRSMAVVFIEQKPVTRYTKQMVDGVEKEVAVPAFKEEKQIISLATIQSPLGNQFRITGLDGPGESSELALLLRAGGLAAPMYFAEERTIGPSLGADNIAKGIDASLWGMLFVSLFIIVIYRFFGVIATVALAFNMVMLVALMSILGATLTLPGIAGIVLTMGMAVDANVLIFSRIREELANGMSVQRAIHEGFNRAFTAILDANLTSLLVGGILYAMGTGPVKGFAVTMSLGIITSMFTAIMVTRAMVNLIFGGRDFKKLWI</sequence>
<accession>Q9HXI1</accession>
<comment type="function">
    <text evidence="1">Part of the Sec protein translocase complex. Interacts with the SecYEG preprotein conducting channel. SecDF uses the proton motive force (PMF) to complete protein translocation after the ATP-dependent function of SecA.</text>
</comment>
<comment type="subunit">
    <text evidence="1">Forms a complex with SecF. Part of the essential Sec protein translocation apparatus which comprises SecA, SecYEG and auxiliary proteins SecDF-YajC and YidC.</text>
</comment>
<comment type="subcellular location">
    <subcellularLocation>
        <location evidence="1">Cell inner membrane</location>
        <topology evidence="1">Multi-pass membrane protein</topology>
    </subcellularLocation>
</comment>
<comment type="similarity">
    <text evidence="1">Belongs to the SecD/SecF family. SecD subfamily.</text>
</comment>
<organism>
    <name type="scientific">Pseudomonas aeruginosa (strain ATCC 15692 / DSM 22644 / CIP 104116 / JCM 14847 / LMG 12228 / 1C / PRS 101 / PAO1)</name>
    <dbReference type="NCBI Taxonomy" id="208964"/>
    <lineage>
        <taxon>Bacteria</taxon>
        <taxon>Pseudomonadati</taxon>
        <taxon>Pseudomonadota</taxon>
        <taxon>Gammaproteobacteria</taxon>
        <taxon>Pseudomonadales</taxon>
        <taxon>Pseudomonadaceae</taxon>
        <taxon>Pseudomonas</taxon>
    </lineage>
</organism>
<evidence type="ECO:0000255" key="1">
    <source>
        <dbReference type="HAMAP-Rule" id="MF_01463"/>
    </source>
</evidence>